<gene>
    <name evidence="1" type="primary">thrS</name>
    <name type="ordered locus">SP_1631</name>
</gene>
<comment type="function">
    <text evidence="1">Catalyzes the attachment of threonine to tRNA(Thr) in a two-step reaction: L-threonine is first activated by ATP to form Thr-AMP and then transferred to the acceptor end of tRNA(Thr). Also edits incorrectly charged L-seryl-tRNA(Thr).</text>
</comment>
<comment type="catalytic activity">
    <reaction evidence="1">
        <text>tRNA(Thr) + L-threonine + ATP = L-threonyl-tRNA(Thr) + AMP + diphosphate + H(+)</text>
        <dbReference type="Rhea" id="RHEA:24624"/>
        <dbReference type="Rhea" id="RHEA-COMP:9670"/>
        <dbReference type="Rhea" id="RHEA-COMP:9704"/>
        <dbReference type="ChEBI" id="CHEBI:15378"/>
        <dbReference type="ChEBI" id="CHEBI:30616"/>
        <dbReference type="ChEBI" id="CHEBI:33019"/>
        <dbReference type="ChEBI" id="CHEBI:57926"/>
        <dbReference type="ChEBI" id="CHEBI:78442"/>
        <dbReference type="ChEBI" id="CHEBI:78534"/>
        <dbReference type="ChEBI" id="CHEBI:456215"/>
        <dbReference type="EC" id="6.1.1.3"/>
    </reaction>
</comment>
<comment type="cofactor">
    <cofactor evidence="1">
        <name>Zn(2+)</name>
        <dbReference type="ChEBI" id="CHEBI:29105"/>
    </cofactor>
    <text evidence="1">Binds 1 zinc ion per subunit.</text>
</comment>
<comment type="subunit">
    <text evidence="1">Homodimer.</text>
</comment>
<comment type="interaction">
    <interactant intactId="EBI-2207332">
        <id>Q97PI4</id>
    </interactant>
    <interactant intactId="EBI-2206949">
        <id>Q97NV3</id>
        <label>groES</label>
    </interactant>
    <organismsDiffer>false</organismsDiffer>
    <experiments>2</experiments>
</comment>
<comment type="subcellular location">
    <subcellularLocation>
        <location evidence="1">Cytoplasm</location>
    </subcellularLocation>
</comment>
<comment type="similarity">
    <text evidence="1">Belongs to the class-II aminoacyl-tRNA synthetase family.</text>
</comment>
<keyword id="KW-0030">Aminoacyl-tRNA synthetase</keyword>
<keyword id="KW-0067">ATP-binding</keyword>
<keyword id="KW-0963">Cytoplasm</keyword>
<keyword id="KW-0436">Ligase</keyword>
<keyword id="KW-0479">Metal-binding</keyword>
<keyword id="KW-0547">Nucleotide-binding</keyword>
<keyword id="KW-0648">Protein biosynthesis</keyword>
<keyword id="KW-1185">Reference proteome</keyword>
<keyword id="KW-0694">RNA-binding</keyword>
<keyword id="KW-0820">tRNA-binding</keyword>
<keyword id="KW-0862">Zinc</keyword>
<sequence length="647" mass="74711">MINITFPDGAVREFESGVTTFEIAQSISNSLAKKALAGKFNGKLIDTTRAITEDGSIEIVTPDHEDALPILRHSAAHLFAQAARRLFPDIHLGVGPAIEDGFYYDTDNTAGQISNEDLPRIEEEMQKIVKENFPSIREEVTKDEAREIFKNDPYKLELIEEHSEDEGGLTIYRQGEYVDLCRGPHVPSTGRIQIFHLLHVAGAYWRGNSDNAMMQRIYGTAWFDKKDLKNYLQMREEAKERDHRKLGKELDLFMISQEVGQGLPFWLPNGATIRRELERYIVNKELVSGYQHVYTPPLASVELYKTSGHWDHYQEDMFPTMDMGDGEEFVLRPMNCPHHIQVFKHHVHSYRELPIRIAEIGMMHRYEKSGALTGLQRVREMSLNDGHLFVTPEQIQEEFQRALQLIIDVYEDFNLTDYRFRLSLRDPQDTHKYFDNDEMWENAQTMLRAALDEMGVDYFEAEGEAAFYGPKLDIQIKTALGKEETLSTIQLDFLLPERFDLKYIGADGEDHRPVMIHRGVISTMERFTAILIENYKGAFPTWLAPHQVTLIPVSNEKHVDYAWEVAKKLRDRGVRADVDERNEKMQFKIRASQTSKIPYQLIVGDKEMEDETVNVRRYGQKETQTVSVDNFVQAILADIANKSRVEK</sequence>
<proteinExistence type="evidence at protein level"/>
<organism>
    <name type="scientific">Streptococcus pneumoniae serotype 4 (strain ATCC BAA-334 / TIGR4)</name>
    <dbReference type="NCBI Taxonomy" id="170187"/>
    <lineage>
        <taxon>Bacteria</taxon>
        <taxon>Bacillati</taxon>
        <taxon>Bacillota</taxon>
        <taxon>Bacilli</taxon>
        <taxon>Lactobacillales</taxon>
        <taxon>Streptococcaceae</taxon>
        <taxon>Streptococcus</taxon>
    </lineage>
</organism>
<evidence type="ECO:0000255" key="1">
    <source>
        <dbReference type="HAMAP-Rule" id="MF_00184"/>
    </source>
</evidence>
<evidence type="ECO:0000255" key="2">
    <source>
        <dbReference type="PROSITE-ProRule" id="PRU01228"/>
    </source>
</evidence>
<accession>Q97PI4</accession>
<feature type="chain" id="PRO_0000101060" description="Threonine--tRNA ligase">
    <location>
        <begin position="1"/>
        <end position="647"/>
    </location>
</feature>
<feature type="domain" description="TGS" evidence="2">
    <location>
        <begin position="1"/>
        <end position="61"/>
    </location>
</feature>
<feature type="region of interest" description="Catalytic" evidence="1">
    <location>
        <begin position="242"/>
        <end position="540"/>
    </location>
</feature>
<feature type="binding site" evidence="1">
    <location>
        <position position="336"/>
    </location>
    <ligand>
        <name>Zn(2+)</name>
        <dbReference type="ChEBI" id="CHEBI:29105"/>
    </ligand>
</feature>
<feature type="binding site" evidence="1">
    <location>
        <position position="387"/>
    </location>
    <ligand>
        <name>Zn(2+)</name>
        <dbReference type="ChEBI" id="CHEBI:29105"/>
    </ligand>
</feature>
<feature type="binding site" evidence="1">
    <location>
        <position position="517"/>
    </location>
    <ligand>
        <name>Zn(2+)</name>
        <dbReference type="ChEBI" id="CHEBI:29105"/>
    </ligand>
</feature>
<reference key="1">
    <citation type="journal article" date="2001" name="Science">
        <title>Complete genome sequence of a virulent isolate of Streptococcus pneumoniae.</title>
        <authorList>
            <person name="Tettelin H."/>
            <person name="Nelson K.E."/>
            <person name="Paulsen I.T."/>
            <person name="Eisen J.A."/>
            <person name="Read T.D."/>
            <person name="Peterson S.N."/>
            <person name="Heidelberg J.F."/>
            <person name="DeBoy R.T."/>
            <person name="Haft D.H."/>
            <person name="Dodson R.J."/>
            <person name="Durkin A.S."/>
            <person name="Gwinn M.L."/>
            <person name="Kolonay J.F."/>
            <person name="Nelson W.C."/>
            <person name="Peterson J.D."/>
            <person name="Umayam L.A."/>
            <person name="White O."/>
            <person name="Salzberg S.L."/>
            <person name="Lewis M.R."/>
            <person name="Radune D."/>
            <person name="Holtzapple E.K."/>
            <person name="Khouri H.M."/>
            <person name="Wolf A.M."/>
            <person name="Utterback T.R."/>
            <person name="Hansen C.L."/>
            <person name="McDonald L.A."/>
            <person name="Feldblyum T.V."/>
            <person name="Angiuoli S.V."/>
            <person name="Dickinson T."/>
            <person name="Hickey E.K."/>
            <person name="Holt I.E."/>
            <person name="Loftus B.J."/>
            <person name="Yang F."/>
            <person name="Smith H.O."/>
            <person name="Venter J.C."/>
            <person name="Dougherty B.A."/>
            <person name="Morrison D.A."/>
            <person name="Hollingshead S.K."/>
            <person name="Fraser C.M."/>
        </authorList>
    </citation>
    <scope>NUCLEOTIDE SEQUENCE [LARGE SCALE GENOMIC DNA]</scope>
    <source>
        <strain>ATCC BAA-334 / TIGR4</strain>
    </source>
</reference>
<dbReference type="EC" id="6.1.1.3" evidence="1"/>
<dbReference type="EMBL" id="AE005672">
    <property type="protein sequence ID" value="AAK75711.1"/>
    <property type="molecule type" value="Genomic_DNA"/>
</dbReference>
<dbReference type="PIR" id="F95189">
    <property type="entry name" value="F95189"/>
</dbReference>
<dbReference type="RefSeq" id="WP_000608356.1">
    <property type="nucleotide sequence ID" value="NZ_CP155539.1"/>
</dbReference>
<dbReference type="SMR" id="Q97PI4"/>
<dbReference type="IntAct" id="Q97PI4">
    <property type="interactions" value="1"/>
</dbReference>
<dbReference type="PaxDb" id="170187-SP_1631"/>
<dbReference type="EnsemblBacteria" id="AAK75711">
    <property type="protein sequence ID" value="AAK75711"/>
    <property type="gene ID" value="SP_1631"/>
</dbReference>
<dbReference type="KEGG" id="spn:SP_1631"/>
<dbReference type="eggNOG" id="COG0441">
    <property type="taxonomic scope" value="Bacteria"/>
</dbReference>
<dbReference type="PhylomeDB" id="Q97PI4"/>
<dbReference type="BioCyc" id="SPNE170187:G1FZB-1650-MONOMER"/>
<dbReference type="Proteomes" id="UP000000585">
    <property type="component" value="Chromosome"/>
</dbReference>
<dbReference type="GO" id="GO:0005737">
    <property type="term" value="C:cytoplasm"/>
    <property type="evidence" value="ECO:0007669"/>
    <property type="project" value="UniProtKB-SubCell"/>
</dbReference>
<dbReference type="GO" id="GO:0005524">
    <property type="term" value="F:ATP binding"/>
    <property type="evidence" value="ECO:0007669"/>
    <property type="project" value="UniProtKB-UniRule"/>
</dbReference>
<dbReference type="GO" id="GO:0140096">
    <property type="term" value="F:catalytic activity, acting on a protein"/>
    <property type="evidence" value="ECO:0007669"/>
    <property type="project" value="UniProtKB-ARBA"/>
</dbReference>
<dbReference type="GO" id="GO:0046872">
    <property type="term" value="F:metal ion binding"/>
    <property type="evidence" value="ECO:0007669"/>
    <property type="project" value="UniProtKB-KW"/>
</dbReference>
<dbReference type="GO" id="GO:0004829">
    <property type="term" value="F:threonine-tRNA ligase activity"/>
    <property type="evidence" value="ECO:0007669"/>
    <property type="project" value="UniProtKB-UniRule"/>
</dbReference>
<dbReference type="GO" id="GO:0016740">
    <property type="term" value="F:transferase activity"/>
    <property type="evidence" value="ECO:0007669"/>
    <property type="project" value="UniProtKB-ARBA"/>
</dbReference>
<dbReference type="GO" id="GO:0000049">
    <property type="term" value="F:tRNA binding"/>
    <property type="evidence" value="ECO:0007669"/>
    <property type="project" value="UniProtKB-KW"/>
</dbReference>
<dbReference type="GO" id="GO:0006435">
    <property type="term" value="P:threonyl-tRNA aminoacylation"/>
    <property type="evidence" value="ECO:0007669"/>
    <property type="project" value="UniProtKB-UniRule"/>
</dbReference>
<dbReference type="CDD" id="cd01667">
    <property type="entry name" value="TGS_ThrRS"/>
    <property type="match status" value="1"/>
</dbReference>
<dbReference type="CDD" id="cd00860">
    <property type="entry name" value="ThrRS_anticodon"/>
    <property type="match status" value="1"/>
</dbReference>
<dbReference type="CDD" id="cd00771">
    <property type="entry name" value="ThrRS_core"/>
    <property type="match status" value="1"/>
</dbReference>
<dbReference type="FunFam" id="3.10.20.30:FF:000005">
    <property type="entry name" value="Threonine--tRNA ligase"/>
    <property type="match status" value="1"/>
</dbReference>
<dbReference type="FunFam" id="3.30.54.20:FF:000002">
    <property type="entry name" value="Threonine--tRNA ligase"/>
    <property type="match status" value="1"/>
</dbReference>
<dbReference type="FunFam" id="3.30.930.10:FF:000002">
    <property type="entry name" value="Threonine--tRNA ligase"/>
    <property type="match status" value="1"/>
</dbReference>
<dbReference type="FunFam" id="3.40.50.800:FF:000001">
    <property type="entry name" value="Threonine--tRNA ligase"/>
    <property type="match status" value="1"/>
</dbReference>
<dbReference type="FunFam" id="3.30.980.10:FF:000005">
    <property type="entry name" value="Threonyl-tRNA synthetase, mitochondrial"/>
    <property type="match status" value="1"/>
</dbReference>
<dbReference type="Gene3D" id="3.10.20.30">
    <property type="match status" value="1"/>
</dbReference>
<dbReference type="Gene3D" id="3.30.54.20">
    <property type="match status" value="1"/>
</dbReference>
<dbReference type="Gene3D" id="3.40.50.800">
    <property type="entry name" value="Anticodon-binding domain"/>
    <property type="match status" value="1"/>
</dbReference>
<dbReference type="Gene3D" id="3.30.930.10">
    <property type="entry name" value="Bira Bifunctional Protein, Domain 2"/>
    <property type="match status" value="1"/>
</dbReference>
<dbReference type="Gene3D" id="3.30.980.10">
    <property type="entry name" value="Threonyl-trna Synthetase, Chain A, domain 2"/>
    <property type="match status" value="1"/>
</dbReference>
<dbReference type="HAMAP" id="MF_00184">
    <property type="entry name" value="Thr_tRNA_synth"/>
    <property type="match status" value="1"/>
</dbReference>
<dbReference type="InterPro" id="IPR002314">
    <property type="entry name" value="aa-tRNA-synt_IIb"/>
</dbReference>
<dbReference type="InterPro" id="IPR006195">
    <property type="entry name" value="aa-tRNA-synth_II"/>
</dbReference>
<dbReference type="InterPro" id="IPR045864">
    <property type="entry name" value="aa-tRNA-synth_II/BPL/LPL"/>
</dbReference>
<dbReference type="InterPro" id="IPR004154">
    <property type="entry name" value="Anticodon-bd"/>
</dbReference>
<dbReference type="InterPro" id="IPR036621">
    <property type="entry name" value="Anticodon-bd_dom_sf"/>
</dbReference>
<dbReference type="InterPro" id="IPR012675">
    <property type="entry name" value="Beta-grasp_dom_sf"/>
</dbReference>
<dbReference type="InterPro" id="IPR004095">
    <property type="entry name" value="TGS"/>
</dbReference>
<dbReference type="InterPro" id="IPR012676">
    <property type="entry name" value="TGS-like"/>
</dbReference>
<dbReference type="InterPro" id="IPR002320">
    <property type="entry name" value="Thr-tRNA-ligase_IIa"/>
</dbReference>
<dbReference type="InterPro" id="IPR018163">
    <property type="entry name" value="Thr/Ala-tRNA-synth_IIc_edit"/>
</dbReference>
<dbReference type="InterPro" id="IPR047246">
    <property type="entry name" value="ThrRS_anticodon"/>
</dbReference>
<dbReference type="InterPro" id="IPR033728">
    <property type="entry name" value="ThrRS_core"/>
</dbReference>
<dbReference type="InterPro" id="IPR012947">
    <property type="entry name" value="tRNA_SAD"/>
</dbReference>
<dbReference type="NCBIfam" id="TIGR00418">
    <property type="entry name" value="thrS"/>
    <property type="match status" value="1"/>
</dbReference>
<dbReference type="PANTHER" id="PTHR11451:SF56">
    <property type="entry name" value="THREONINE--TRNA LIGASE 1"/>
    <property type="match status" value="1"/>
</dbReference>
<dbReference type="PANTHER" id="PTHR11451">
    <property type="entry name" value="THREONINE-TRNA LIGASE"/>
    <property type="match status" value="1"/>
</dbReference>
<dbReference type="Pfam" id="PF03129">
    <property type="entry name" value="HGTP_anticodon"/>
    <property type="match status" value="1"/>
</dbReference>
<dbReference type="Pfam" id="PF02824">
    <property type="entry name" value="TGS"/>
    <property type="match status" value="1"/>
</dbReference>
<dbReference type="Pfam" id="PF00587">
    <property type="entry name" value="tRNA-synt_2b"/>
    <property type="match status" value="1"/>
</dbReference>
<dbReference type="Pfam" id="PF07973">
    <property type="entry name" value="tRNA_SAD"/>
    <property type="match status" value="1"/>
</dbReference>
<dbReference type="PRINTS" id="PR01047">
    <property type="entry name" value="TRNASYNTHTHR"/>
</dbReference>
<dbReference type="SMART" id="SM00863">
    <property type="entry name" value="tRNA_SAD"/>
    <property type="match status" value="1"/>
</dbReference>
<dbReference type="SUPFAM" id="SSF52954">
    <property type="entry name" value="Class II aaRS ABD-related"/>
    <property type="match status" value="1"/>
</dbReference>
<dbReference type="SUPFAM" id="SSF55681">
    <property type="entry name" value="Class II aaRS and biotin synthetases"/>
    <property type="match status" value="1"/>
</dbReference>
<dbReference type="SUPFAM" id="SSF81271">
    <property type="entry name" value="TGS-like"/>
    <property type="match status" value="1"/>
</dbReference>
<dbReference type="SUPFAM" id="SSF55186">
    <property type="entry name" value="ThrRS/AlaRS common domain"/>
    <property type="match status" value="1"/>
</dbReference>
<dbReference type="PROSITE" id="PS50862">
    <property type="entry name" value="AA_TRNA_LIGASE_II"/>
    <property type="match status" value="1"/>
</dbReference>
<dbReference type="PROSITE" id="PS51880">
    <property type="entry name" value="TGS"/>
    <property type="match status" value="1"/>
</dbReference>
<protein>
    <recommendedName>
        <fullName evidence="1">Threonine--tRNA ligase</fullName>
        <ecNumber evidence="1">6.1.1.3</ecNumber>
    </recommendedName>
    <alternativeName>
        <fullName evidence="1">Threonyl-tRNA synthetase</fullName>
        <shortName evidence="1">ThrRS</shortName>
    </alternativeName>
</protein>
<name>SYT_STRPN</name>